<protein>
    <recommendedName>
        <fullName evidence="1">3-methyl-2-oxobutanoate hydroxymethyltransferase</fullName>
        <ecNumber evidence="1">2.1.2.11</ecNumber>
    </recommendedName>
    <alternativeName>
        <fullName evidence="1">Ketopantoate hydroxymethyltransferase</fullName>
        <shortName evidence="1">KPHMT</shortName>
    </alternativeName>
</protein>
<evidence type="ECO:0000255" key="1">
    <source>
        <dbReference type="HAMAP-Rule" id="MF_00156"/>
    </source>
</evidence>
<accession>B1Y4K8</accession>
<name>PANB_LEPCP</name>
<sequence length="289" mass="30258">MSSHAEPTPVARNRKPLTLPALRAMQQRGEKIAMLTAYESTLARVADEAGVDTILVGDSLGMVVQGHASTLPVTLDEMAYHTRCVARGLQGGAAWLVADLPFASYHQGPSQAMAAAATLMQAGAQMIKLEGGGWTAETVRFLVERGVPVCAHLGLTPQSVHALGGYRIQGRDEAGAAELRRQATELTQAGAAMMVLELMPSAVAAAVQADNPQLMTIGIGAGPATAGQVLVVHDMLGLTRGKLPRFVRNFMHSEAGQNLSVEDAIRAYVAAVKDASFPDPVAHAYASAS</sequence>
<keyword id="KW-0963">Cytoplasm</keyword>
<keyword id="KW-0460">Magnesium</keyword>
<keyword id="KW-0479">Metal-binding</keyword>
<keyword id="KW-0566">Pantothenate biosynthesis</keyword>
<keyword id="KW-1185">Reference proteome</keyword>
<keyword id="KW-0808">Transferase</keyword>
<reference key="1">
    <citation type="submission" date="2008-03" db="EMBL/GenBank/DDBJ databases">
        <title>Complete sequence of Leptothrix cholodnii SP-6.</title>
        <authorList>
            <consortium name="US DOE Joint Genome Institute"/>
            <person name="Copeland A."/>
            <person name="Lucas S."/>
            <person name="Lapidus A."/>
            <person name="Glavina del Rio T."/>
            <person name="Dalin E."/>
            <person name="Tice H."/>
            <person name="Bruce D."/>
            <person name="Goodwin L."/>
            <person name="Pitluck S."/>
            <person name="Chertkov O."/>
            <person name="Brettin T."/>
            <person name="Detter J.C."/>
            <person name="Han C."/>
            <person name="Kuske C.R."/>
            <person name="Schmutz J."/>
            <person name="Larimer F."/>
            <person name="Land M."/>
            <person name="Hauser L."/>
            <person name="Kyrpides N."/>
            <person name="Lykidis A."/>
            <person name="Emerson D."/>
            <person name="Richardson P."/>
        </authorList>
    </citation>
    <scope>NUCLEOTIDE SEQUENCE [LARGE SCALE GENOMIC DNA]</scope>
    <source>
        <strain>ATCC 51168 / LMG 8142 / SP-6</strain>
    </source>
</reference>
<gene>
    <name evidence="1" type="primary">panB</name>
    <name type="ordered locus">Lcho_1178</name>
</gene>
<feature type="chain" id="PRO_1000096980" description="3-methyl-2-oxobutanoate hydroxymethyltransferase">
    <location>
        <begin position="1"/>
        <end position="289"/>
    </location>
</feature>
<feature type="active site" description="Proton acceptor" evidence="1">
    <location>
        <position position="197"/>
    </location>
</feature>
<feature type="binding site" evidence="1">
    <location>
        <begin position="58"/>
        <end position="59"/>
    </location>
    <ligand>
        <name>3-methyl-2-oxobutanoate</name>
        <dbReference type="ChEBI" id="CHEBI:11851"/>
    </ligand>
</feature>
<feature type="binding site" evidence="1">
    <location>
        <position position="58"/>
    </location>
    <ligand>
        <name>Mg(2+)</name>
        <dbReference type="ChEBI" id="CHEBI:18420"/>
    </ligand>
</feature>
<feature type="binding site" evidence="1">
    <location>
        <position position="99"/>
    </location>
    <ligand>
        <name>3-methyl-2-oxobutanoate</name>
        <dbReference type="ChEBI" id="CHEBI:11851"/>
    </ligand>
</feature>
<feature type="binding site" evidence="1">
    <location>
        <position position="99"/>
    </location>
    <ligand>
        <name>Mg(2+)</name>
        <dbReference type="ChEBI" id="CHEBI:18420"/>
    </ligand>
</feature>
<feature type="binding site" evidence="1">
    <location>
        <position position="128"/>
    </location>
    <ligand>
        <name>3-methyl-2-oxobutanoate</name>
        <dbReference type="ChEBI" id="CHEBI:11851"/>
    </ligand>
</feature>
<feature type="binding site" evidence="1">
    <location>
        <position position="130"/>
    </location>
    <ligand>
        <name>Mg(2+)</name>
        <dbReference type="ChEBI" id="CHEBI:18420"/>
    </ligand>
</feature>
<dbReference type="EC" id="2.1.2.11" evidence="1"/>
<dbReference type="EMBL" id="CP001013">
    <property type="protein sequence ID" value="ACB33447.1"/>
    <property type="molecule type" value="Genomic_DNA"/>
</dbReference>
<dbReference type="RefSeq" id="WP_012346209.1">
    <property type="nucleotide sequence ID" value="NC_010524.1"/>
</dbReference>
<dbReference type="SMR" id="B1Y4K8"/>
<dbReference type="STRING" id="395495.Lcho_1178"/>
<dbReference type="KEGG" id="lch:Lcho_1178"/>
<dbReference type="eggNOG" id="COG0413">
    <property type="taxonomic scope" value="Bacteria"/>
</dbReference>
<dbReference type="HOGENOM" id="CLU_036645_1_0_4"/>
<dbReference type="OrthoDB" id="9781789at2"/>
<dbReference type="UniPathway" id="UPA00028">
    <property type="reaction ID" value="UER00003"/>
</dbReference>
<dbReference type="Proteomes" id="UP000001693">
    <property type="component" value="Chromosome"/>
</dbReference>
<dbReference type="GO" id="GO:0005737">
    <property type="term" value="C:cytoplasm"/>
    <property type="evidence" value="ECO:0007669"/>
    <property type="project" value="UniProtKB-SubCell"/>
</dbReference>
<dbReference type="GO" id="GO:0003864">
    <property type="term" value="F:3-methyl-2-oxobutanoate hydroxymethyltransferase activity"/>
    <property type="evidence" value="ECO:0007669"/>
    <property type="project" value="UniProtKB-UniRule"/>
</dbReference>
<dbReference type="GO" id="GO:0000287">
    <property type="term" value="F:magnesium ion binding"/>
    <property type="evidence" value="ECO:0007669"/>
    <property type="project" value="TreeGrafter"/>
</dbReference>
<dbReference type="GO" id="GO:0015940">
    <property type="term" value="P:pantothenate biosynthetic process"/>
    <property type="evidence" value="ECO:0007669"/>
    <property type="project" value="UniProtKB-UniRule"/>
</dbReference>
<dbReference type="CDD" id="cd06557">
    <property type="entry name" value="KPHMT-like"/>
    <property type="match status" value="1"/>
</dbReference>
<dbReference type="FunFam" id="3.20.20.60:FF:000003">
    <property type="entry name" value="3-methyl-2-oxobutanoate hydroxymethyltransferase"/>
    <property type="match status" value="1"/>
</dbReference>
<dbReference type="Gene3D" id="3.20.20.60">
    <property type="entry name" value="Phosphoenolpyruvate-binding domains"/>
    <property type="match status" value="1"/>
</dbReference>
<dbReference type="HAMAP" id="MF_00156">
    <property type="entry name" value="PanB"/>
    <property type="match status" value="1"/>
</dbReference>
<dbReference type="InterPro" id="IPR003700">
    <property type="entry name" value="Pantoate_hydroxy_MeTrfase"/>
</dbReference>
<dbReference type="InterPro" id="IPR015813">
    <property type="entry name" value="Pyrv/PenolPyrv_kinase-like_dom"/>
</dbReference>
<dbReference type="InterPro" id="IPR040442">
    <property type="entry name" value="Pyrv_kinase-like_dom_sf"/>
</dbReference>
<dbReference type="NCBIfam" id="TIGR00222">
    <property type="entry name" value="panB"/>
    <property type="match status" value="1"/>
</dbReference>
<dbReference type="NCBIfam" id="NF001452">
    <property type="entry name" value="PRK00311.1"/>
    <property type="match status" value="1"/>
</dbReference>
<dbReference type="PANTHER" id="PTHR20881">
    <property type="entry name" value="3-METHYL-2-OXOBUTANOATE HYDROXYMETHYLTRANSFERASE"/>
    <property type="match status" value="1"/>
</dbReference>
<dbReference type="PANTHER" id="PTHR20881:SF0">
    <property type="entry name" value="3-METHYL-2-OXOBUTANOATE HYDROXYMETHYLTRANSFERASE"/>
    <property type="match status" value="1"/>
</dbReference>
<dbReference type="Pfam" id="PF02548">
    <property type="entry name" value="Pantoate_transf"/>
    <property type="match status" value="1"/>
</dbReference>
<dbReference type="PIRSF" id="PIRSF000388">
    <property type="entry name" value="Pantoate_hydroxy_MeTrfase"/>
    <property type="match status" value="1"/>
</dbReference>
<dbReference type="SUPFAM" id="SSF51621">
    <property type="entry name" value="Phosphoenolpyruvate/pyruvate domain"/>
    <property type="match status" value="1"/>
</dbReference>
<comment type="function">
    <text evidence="1">Catalyzes the reversible reaction in which hydroxymethyl group from 5,10-methylenetetrahydrofolate is transferred onto alpha-ketoisovalerate to form ketopantoate.</text>
</comment>
<comment type="catalytic activity">
    <reaction evidence="1">
        <text>3-methyl-2-oxobutanoate + (6R)-5,10-methylene-5,6,7,8-tetrahydrofolate + H2O = 2-dehydropantoate + (6S)-5,6,7,8-tetrahydrofolate</text>
        <dbReference type="Rhea" id="RHEA:11824"/>
        <dbReference type="ChEBI" id="CHEBI:11561"/>
        <dbReference type="ChEBI" id="CHEBI:11851"/>
        <dbReference type="ChEBI" id="CHEBI:15377"/>
        <dbReference type="ChEBI" id="CHEBI:15636"/>
        <dbReference type="ChEBI" id="CHEBI:57453"/>
        <dbReference type="EC" id="2.1.2.11"/>
    </reaction>
</comment>
<comment type="cofactor">
    <cofactor evidence="1">
        <name>Mg(2+)</name>
        <dbReference type="ChEBI" id="CHEBI:18420"/>
    </cofactor>
    <text evidence="1">Binds 1 Mg(2+) ion per subunit.</text>
</comment>
<comment type="pathway">
    <text evidence="1">Cofactor biosynthesis; (R)-pantothenate biosynthesis; (R)-pantoate from 3-methyl-2-oxobutanoate: step 1/2.</text>
</comment>
<comment type="subunit">
    <text evidence="1">Homodecamer; pentamer of dimers.</text>
</comment>
<comment type="subcellular location">
    <subcellularLocation>
        <location evidence="1">Cytoplasm</location>
    </subcellularLocation>
</comment>
<comment type="similarity">
    <text evidence="1">Belongs to the PanB family.</text>
</comment>
<organism>
    <name type="scientific">Leptothrix cholodnii (strain ATCC 51168 / LMG 8142 / SP-6)</name>
    <name type="common">Leptothrix discophora (strain SP-6)</name>
    <dbReference type="NCBI Taxonomy" id="395495"/>
    <lineage>
        <taxon>Bacteria</taxon>
        <taxon>Pseudomonadati</taxon>
        <taxon>Pseudomonadota</taxon>
        <taxon>Betaproteobacteria</taxon>
        <taxon>Burkholderiales</taxon>
        <taxon>Sphaerotilaceae</taxon>
        <taxon>Leptothrix</taxon>
    </lineage>
</organism>
<proteinExistence type="inferred from homology"/>